<proteinExistence type="inferred from homology"/>
<reference key="1">
    <citation type="journal article" date="2002" name="Proc. Natl. Acad. Sci. U.S.A.">
        <title>The Brucella suis genome reveals fundamental similarities between animal and plant pathogens and symbionts.</title>
        <authorList>
            <person name="Paulsen I.T."/>
            <person name="Seshadri R."/>
            <person name="Nelson K.E."/>
            <person name="Eisen J.A."/>
            <person name="Heidelberg J.F."/>
            <person name="Read T.D."/>
            <person name="Dodson R.J."/>
            <person name="Umayam L.A."/>
            <person name="Brinkac L.M."/>
            <person name="Beanan M.J."/>
            <person name="Daugherty S.C."/>
            <person name="DeBoy R.T."/>
            <person name="Durkin A.S."/>
            <person name="Kolonay J.F."/>
            <person name="Madupu R."/>
            <person name="Nelson W.C."/>
            <person name="Ayodeji B."/>
            <person name="Kraul M."/>
            <person name="Shetty J."/>
            <person name="Malek J.A."/>
            <person name="Van Aken S.E."/>
            <person name="Riedmuller S."/>
            <person name="Tettelin H."/>
            <person name="Gill S.R."/>
            <person name="White O."/>
            <person name="Salzberg S.L."/>
            <person name="Hoover D.L."/>
            <person name="Lindler L.E."/>
            <person name="Halling S.M."/>
            <person name="Boyle S.M."/>
            <person name="Fraser C.M."/>
        </authorList>
    </citation>
    <scope>NUCLEOTIDE SEQUENCE [LARGE SCALE GENOMIC DNA]</scope>
    <source>
        <strain>1330</strain>
    </source>
</reference>
<reference key="2">
    <citation type="journal article" date="2011" name="J. Bacteriol.">
        <title>Revised genome sequence of Brucella suis 1330.</title>
        <authorList>
            <person name="Tae H."/>
            <person name="Shallom S."/>
            <person name="Settlage R."/>
            <person name="Preston D."/>
            <person name="Adams L.G."/>
            <person name="Garner H.R."/>
        </authorList>
    </citation>
    <scope>NUCLEOTIDE SEQUENCE [LARGE SCALE GENOMIC DNA]</scope>
    <source>
        <strain>1330</strain>
    </source>
</reference>
<keyword id="KW-0021">Allosteric enzyme</keyword>
<keyword id="KW-0328">Glycosyltransferase</keyword>
<keyword id="KW-0342">GTP-binding</keyword>
<keyword id="KW-0460">Magnesium</keyword>
<keyword id="KW-0547">Nucleotide-binding</keyword>
<keyword id="KW-0808">Transferase</keyword>
<feature type="chain" id="PRO_0000120807" description="Uracil phosphoribosyltransferase">
    <location>
        <begin position="1"/>
        <end position="208"/>
    </location>
</feature>
<feature type="binding site" evidence="1">
    <location>
        <position position="78"/>
    </location>
    <ligand>
        <name>5-phospho-alpha-D-ribose 1-diphosphate</name>
        <dbReference type="ChEBI" id="CHEBI:58017"/>
    </ligand>
</feature>
<feature type="binding site" evidence="1">
    <location>
        <position position="103"/>
    </location>
    <ligand>
        <name>5-phospho-alpha-D-ribose 1-diphosphate</name>
        <dbReference type="ChEBI" id="CHEBI:58017"/>
    </ligand>
</feature>
<feature type="binding site" evidence="1">
    <location>
        <begin position="130"/>
        <end position="138"/>
    </location>
    <ligand>
        <name>5-phospho-alpha-D-ribose 1-diphosphate</name>
        <dbReference type="ChEBI" id="CHEBI:58017"/>
    </ligand>
</feature>
<feature type="binding site" evidence="1">
    <location>
        <position position="193"/>
    </location>
    <ligand>
        <name>uracil</name>
        <dbReference type="ChEBI" id="CHEBI:17568"/>
    </ligand>
</feature>
<feature type="binding site" evidence="1">
    <location>
        <begin position="198"/>
        <end position="200"/>
    </location>
    <ligand>
        <name>uracil</name>
        <dbReference type="ChEBI" id="CHEBI:17568"/>
    </ligand>
</feature>
<feature type="binding site" evidence="1">
    <location>
        <position position="199"/>
    </location>
    <ligand>
        <name>5-phospho-alpha-D-ribose 1-diphosphate</name>
        <dbReference type="ChEBI" id="CHEBI:58017"/>
    </ligand>
</feature>
<name>UPP_BRUSU</name>
<organism>
    <name type="scientific">Brucella suis biovar 1 (strain 1330)</name>
    <dbReference type="NCBI Taxonomy" id="204722"/>
    <lineage>
        <taxon>Bacteria</taxon>
        <taxon>Pseudomonadati</taxon>
        <taxon>Pseudomonadota</taxon>
        <taxon>Alphaproteobacteria</taxon>
        <taxon>Hyphomicrobiales</taxon>
        <taxon>Brucellaceae</taxon>
        <taxon>Brucella/Ochrobactrum group</taxon>
        <taxon>Brucella</taxon>
    </lineage>
</organism>
<dbReference type="EC" id="2.4.2.9" evidence="1"/>
<dbReference type="EMBL" id="AE014292">
    <property type="protein sequence ID" value="AAN34234.1"/>
    <property type="status" value="ALT_INIT"/>
    <property type="molecule type" value="Genomic_DNA"/>
</dbReference>
<dbReference type="EMBL" id="CP002998">
    <property type="protein sequence ID" value="AEM20511.1"/>
    <property type="molecule type" value="Genomic_DNA"/>
</dbReference>
<dbReference type="RefSeq" id="WP_004690415.1">
    <property type="nucleotide sequence ID" value="NZ_KN046805.1"/>
</dbReference>
<dbReference type="SMR" id="Q8FUZ2"/>
<dbReference type="GeneID" id="55592687"/>
<dbReference type="KEGG" id="bms:BRA1067"/>
<dbReference type="KEGG" id="bsi:BS1330_II1059"/>
<dbReference type="PATRIC" id="fig|204722.21.peg.1052"/>
<dbReference type="HOGENOM" id="CLU_067096_2_2_5"/>
<dbReference type="PhylomeDB" id="Q8FUZ2"/>
<dbReference type="UniPathway" id="UPA00574">
    <property type="reaction ID" value="UER00636"/>
</dbReference>
<dbReference type="Proteomes" id="UP000007104">
    <property type="component" value="Chromosome II"/>
</dbReference>
<dbReference type="GO" id="GO:0005525">
    <property type="term" value="F:GTP binding"/>
    <property type="evidence" value="ECO:0007669"/>
    <property type="project" value="UniProtKB-KW"/>
</dbReference>
<dbReference type="GO" id="GO:0000287">
    <property type="term" value="F:magnesium ion binding"/>
    <property type="evidence" value="ECO:0007669"/>
    <property type="project" value="UniProtKB-UniRule"/>
</dbReference>
<dbReference type="GO" id="GO:0004845">
    <property type="term" value="F:uracil phosphoribosyltransferase activity"/>
    <property type="evidence" value="ECO:0007669"/>
    <property type="project" value="UniProtKB-UniRule"/>
</dbReference>
<dbReference type="GO" id="GO:0044206">
    <property type="term" value="P:UMP salvage"/>
    <property type="evidence" value="ECO:0007669"/>
    <property type="project" value="UniProtKB-UniRule"/>
</dbReference>
<dbReference type="GO" id="GO:0006223">
    <property type="term" value="P:uracil salvage"/>
    <property type="evidence" value="ECO:0007669"/>
    <property type="project" value="InterPro"/>
</dbReference>
<dbReference type="CDD" id="cd06223">
    <property type="entry name" value="PRTases_typeI"/>
    <property type="match status" value="1"/>
</dbReference>
<dbReference type="FunFam" id="3.40.50.2020:FF:000003">
    <property type="entry name" value="Uracil phosphoribosyltransferase"/>
    <property type="match status" value="1"/>
</dbReference>
<dbReference type="Gene3D" id="3.40.50.2020">
    <property type="match status" value="1"/>
</dbReference>
<dbReference type="HAMAP" id="MF_01218_B">
    <property type="entry name" value="Upp_B"/>
    <property type="match status" value="1"/>
</dbReference>
<dbReference type="InterPro" id="IPR000836">
    <property type="entry name" value="PRibTrfase_dom"/>
</dbReference>
<dbReference type="InterPro" id="IPR029057">
    <property type="entry name" value="PRTase-like"/>
</dbReference>
<dbReference type="InterPro" id="IPR034332">
    <property type="entry name" value="Upp_B"/>
</dbReference>
<dbReference type="InterPro" id="IPR050054">
    <property type="entry name" value="UPRTase/APRTase"/>
</dbReference>
<dbReference type="InterPro" id="IPR005765">
    <property type="entry name" value="Ura_phspho_trans"/>
</dbReference>
<dbReference type="NCBIfam" id="NF001097">
    <property type="entry name" value="PRK00129.1"/>
    <property type="match status" value="1"/>
</dbReference>
<dbReference type="NCBIfam" id="TIGR01091">
    <property type="entry name" value="upp"/>
    <property type="match status" value="1"/>
</dbReference>
<dbReference type="PANTHER" id="PTHR32315">
    <property type="entry name" value="ADENINE PHOSPHORIBOSYLTRANSFERASE"/>
    <property type="match status" value="1"/>
</dbReference>
<dbReference type="PANTHER" id="PTHR32315:SF4">
    <property type="entry name" value="URACIL PHOSPHORIBOSYLTRANSFERASE, CHLOROPLASTIC"/>
    <property type="match status" value="1"/>
</dbReference>
<dbReference type="Pfam" id="PF14681">
    <property type="entry name" value="UPRTase"/>
    <property type="match status" value="1"/>
</dbReference>
<dbReference type="SUPFAM" id="SSF53271">
    <property type="entry name" value="PRTase-like"/>
    <property type="match status" value="1"/>
</dbReference>
<protein>
    <recommendedName>
        <fullName evidence="1">Uracil phosphoribosyltransferase</fullName>
        <ecNumber evidence="1">2.4.2.9</ecNumber>
    </recommendedName>
    <alternativeName>
        <fullName evidence="1">UMP pyrophosphorylase</fullName>
    </alternativeName>
    <alternativeName>
        <fullName evidence="1">UPRTase</fullName>
    </alternativeName>
</protein>
<accession>Q8FUZ2</accession>
<accession>G0KE73</accession>
<gene>
    <name evidence="1" type="primary">upp</name>
    <name type="ordered locus">BRA1067</name>
    <name type="ordered locus">BS1330_II1059</name>
</gene>
<evidence type="ECO:0000255" key="1">
    <source>
        <dbReference type="HAMAP-Rule" id="MF_01218"/>
    </source>
</evidence>
<evidence type="ECO:0000305" key="2"/>
<sequence length="208" mass="23019">MGVTVVSHPLVQHKLTIMRKKETSTASFQRLLKEISLLLCYEVTRNLELTTMSIETPLMPMEAPVLEGKKLVFASILRAGNGLLEGMLDLVPAARVAHIGLYRDHDTLQPIEYYFKAPEDIVNRLVIVVDPMLATANSAIAAIDKLKERGATNIRFLCLLAAPEGIERFTKAHPDVEVFTASIDERLDEKGYIVPGLGDAGDRMYGTK</sequence>
<comment type="function">
    <text evidence="1">Catalyzes the conversion of uracil and 5-phospho-alpha-D-ribose 1-diphosphate (PRPP) to UMP and diphosphate.</text>
</comment>
<comment type="catalytic activity">
    <reaction evidence="1">
        <text>UMP + diphosphate = 5-phospho-alpha-D-ribose 1-diphosphate + uracil</text>
        <dbReference type="Rhea" id="RHEA:13017"/>
        <dbReference type="ChEBI" id="CHEBI:17568"/>
        <dbReference type="ChEBI" id="CHEBI:33019"/>
        <dbReference type="ChEBI" id="CHEBI:57865"/>
        <dbReference type="ChEBI" id="CHEBI:58017"/>
        <dbReference type="EC" id="2.4.2.9"/>
    </reaction>
</comment>
<comment type="cofactor">
    <cofactor evidence="1">
        <name>Mg(2+)</name>
        <dbReference type="ChEBI" id="CHEBI:18420"/>
    </cofactor>
    <text evidence="1">Binds 1 Mg(2+) ion per subunit. The magnesium is bound as Mg-PRPP.</text>
</comment>
<comment type="activity regulation">
    <text evidence="1">Allosterically activated by GTP.</text>
</comment>
<comment type="pathway">
    <text evidence="1">Pyrimidine metabolism; UMP biosynthesis via salvage pathway; UMP from uracil: step 1/1.</text>
</comment>
<comment type="similarity">
    <text evidence="1">Belongs to the UPRTase family.</text>
</comment>
<comment type="sequence caution" evidence="2">
    <conflict type="erroneous initiation">
        <sequence resource="EMBL-CDS" id="AAN34234"/>
    </conflict>
</comment>